<proteinExistence type="inferred from homology"/>
<name>COAE_ENTFA</name>
<sequence length="199" mass="22465">MTKVLGITGGIATGKSTVVALFKKAGYPIVDGDIIAREIVAKGQPALAAIVETFGPEIVLTTGELDRKKLGQLIFASPQKRELLNETLKPFLRKEILRQIEEAKKKAALVIVDIPLLYEAHYEAIMDQVAVVYVPEKIQKERLMARNQLTEEEAQQRIASQWPIEMKKERADIVFDNQGTREETEQQVKKWLEEQIGKK</sequence>
<reference key="1">
    <citation type="journal article" date="2003" name="Science">
        <title>Role of mobile DNA in the evolution of vancomycin-resistant Enterococcus faecalis.</title>
        <authorList>
            <person name="Paulsen I.T."/>
            <person name="Banerjei L."/>
            <person name="Myers G.S.A."/>
            <person name="Nelson K.E."/>
            <person name="Seshadri R."/>
            <person name="Read T.D."/>
            <person name="Fouts D.E."/>
            <person name="Eisen J.A."/>
            <person name="Gill S.R."/>
            <person name="Heidelberg J.F."/>
            <person name="Tettelin H."/>
            <person name="Dodson R.J."/>
            <person name="Umayam L.A."/>
            <person name="Brinkac L.M."/>
            <person name="Beanan M.J."/>
            <person name="Daugherty S.C."/>
            <person name="DeBoy R.T."/>
            <person name="Durkin S.A."/>
            <person name="Kolonay J.F."/>
            <person name="Madupu R."/>
            <person name="Nelson W.C."/>
            <person name="Vamathevan J.J."/>
            <person name="Tran B."/>
            <person name="Upton J."/>
            <person name="Hansen T."/>
            <person name="Shetty J."/>
            <person name="Khouri H.M."/>
            <person name="Utterback T.R."/>
            <person name="Radune D."/>
            <person name="Ketchum K.A."/>
            <person name="Dougherty B.A."/>
            <person name="Fraser C.M."/>
        </authorList>
    </citation>
    <scope>NUCLEOTIDE SEQUENCE [LARGE SCALE GENOMIC DNA]</scope>
    <source>
        <strain>ATCC 700802 / V583</strain>
    </source>
</reference>
<keyword id="KW-0067">ATP-binding</keyword>
<keyword id="KW-0173">Coenzyme A biosynthesis</keyword>
<keyword id="KW-0963">Cytoplasm</keyword>
<keyword id="KW-0418">Kinase</keyword>
<keyword id="KW-0547">Nucleotide-binding</keyword>
<keyword id="KW-1185">Reference proteome</keyword>
<keyword id="KW-0808">Transferase</keyword>
<feature type="chain" id="PRO_0000172943" description="Dephospho-CoA kinase">
    <location>
        <begin position="1"/>
        <end position="199"/>
    </location>
</feature>
<feature type="domain" description="DPCK" evidence="1">
    <location>
        <begin position="4"/>
        <end position="199"/>
    </location>
</feature>
<feature type="binding site" evidence="1">
    <location>
        <begin position="12"/>
        <end position="17"/>
    </location>
    <ligand>
        <name>ATP</name>
        <dbReference type="ChEBI" id="CHEBI:30616"/>
    </ligand>
</feature>
<organism>
    <name type="scientific">Enterococcus faecalis (strain ATCC 700802 / V583)</name>
    <dbReference type="NCBI Taxonomy" id="226185"/>
    <lineage>
        <taxon>Bacteria</taxon>
        <taxon>Bacillati</taxon>
        <taxon>Bacillota</taxon>
        <taxon>Bacilli</taxon>
        <taxon>Lactobacillales</taxon>
        <taxon>Enterococcaceae</taxon>
        <taxon>Enterococcus</taxon>
    </lineage>
</organism>
<evidence type="ECO:0000255" key="1">
    <source>
        <dbReference type="HAMAP-Rule" id="MF_00376"/>
    </source>
</evidence>
<accession>Q837G2</accession>
<protein>
    <recommendedName>
        <fullName evidence="1">Dephospho-CoA kinase</fullName>
        <ecNumber evidence="1">2.7.1.24</ecNumber>
    </recommendedName>
    <alternativeName>
        <fullName evidence="1">Dephosphocoenzyme A kinase</fullName>
    </alternativeName>
</protein>
<dbReference type="EC" id="2.7.1.24" evidence="1"/>
<dbReference type="EMBL" id="AE016830">
    <property type="protein sequence ID" value="AAO80689.1"/>
    <property type="molecule type" value="Genomic_DNA"/>
</dbReference>
<dbReference type="RefSeq" id="NP_814619.1">
    <property type="nucleotide sequence ID" value="NC_004668.1"/>
</dbReference>
<dbReference type="RefSeq" id="WP_002387006.1">
    <property type="nucleotide sequence ID" value="NZ_KE136527.1"/>
</dbReference>
<dbReference type="SMR" id="Q837G2"/>
<dbReference type="STRING" id="226185.EF_0880"/>
<dbReference type="EnsemblBacteria" id="AAO80689">
    <property type="protein sequence ID" value="AAO80689"/>
    <property type="gene ID" value="EF_0880"/>
</dbReference>
<dbReference type="KEGG" id="efa:EF0880"/>
<dbReference type="PATRIC" id="fig|226185.45.peg.3089"/>
<dbReference type="eggNOG" id="COG0237">
    <property type="taxonomic scope" value="Bacteria"/>
</dbReference>
<dbReference type="HOGENOM" id="CLU_057180_0_0_9"/>
<dbReference type="UniPathway" id="UPA00241">
    <property type="reaction ID" value="UER00356"/>
</dbReference>
<dbReference type="Proteomes" id="UP000001415">
    <property type="component" value="Chromosome"/>
</dbReference>
<dbReference type="GO" id="GO:0005737">
    <property type="term" value="C:cytoplasm"/>
    <property type="evidence" value="ECO:0007669"/>
    <property type="project" value="UniProtKB-SubCell"/>
</dbReference>
<dbReference type="GO" id="GO:0005524">
    <property type="term" value="F:ATP binding"/>
    <property type="evidence" value="ECO:0007669"/>
    <property type="project" value="UniProtKB-UniRule"/>
</dbReference>
<dbReference type="GO" id="GO:0004140">
    <property type="term" value="F:dephospho-CoA kinase activity"/>
    <property type="evidence" value="ECO:0007669"/>
    <property type="project" value="UniProtKB-UniRule"/>
</dbReference>
<dbReference type="GO" id="GO:0015937">
    <property type="term" value="P:coenzyme A biosynthetic process"/>
    <property type="evidence" value="ECO:0007669"/>
    <property type="project" value="UniProtKB-UniRule"/>
</dbReference>
<dbReference type="CDD" id="cd02022">
    <property type="entry name" value="DPCK"/>
    <property type="match status" value="1"/>
</dbReference>
<dbReference type="FunFam" id="3.40.50.300:FF:000991">
    <property type="entry name" value="Dephospho-CoA kinase"/>
    <property type="match status" value="1"/>
</dbReference>
<dbReference type="Gene3D" id="3.40.50.300">
    <property type="entry name" value="P-loop containing nucleotide triphosphate hydrolases"/>
    <property type="match status" value="1"/>
</dbReference>
<dbReference type="HAMAP" id="MF_00376">
    <property type="entry name" value="Dephospho_CoA_kinase"/>
    <property type="match status" value="1"/>
</dbReference>
<dbReference type="InterPro" id="IPR001977">
    <property type="entry name" value="Depp_CoAkinase"/>
</dbReference>
<dbReference type="InterPro" id="IPR027417">
    <property type="entry name" value="P-loop_NTPase"/>
</dbReference>
<dbReference type="NCBIfam" id="TIGR00152">
    <property type="entry name" value="dephospho-CoA kinase"/>
    <property type="match status" value="1"/>
</dbReference>
<dbReference type="PANTHER" id="PTHR10695:SF46">
    <property type="entry name" value="BIFUNCTIONAL COENZYME A SYNTHASE-RELATED"/>
    <property type="match status" value="1"/>
</dbReference>
<dbReference type="PANTHER" id="PTHR10695">
    <property type="entry name" value="DEPHOSPHO-COA KINASE-RELATED"/>
    <property type="match status" value="1"/>
</dbReference>
<dbReference type="Pfam" id="PF01121">
    <property type="entry name" value="CoaE"/>
    <property type="match status" value="1"/>
</dbReference>
<dbReference type="SUPFAM" id="SSF52540">
    <property type="entry name" value="P-loop containing nucleoside triphosphate hydrolases"/>
    <property type="match status" value="1"/>
</dbReference>
<dbReference type="PROSITE" id="PS51219">
    <property type="entry name" value="DPCK"/>
    <property type="match status" value="1"/>
</dbReference>
<comment type="function">
    <text evidence="1">Catalyzes the phosphorylation of the 3'-hydroxyl group of dephosphocoenzyme A to form coenzyme A.</text>
</comment>
<comment type="catalytic activity">
    <reaction evidence="1">
        <text>3'-dephospho-CoA + ATP = ADP + CoA + H(+)</text>
        <dbReference type="Rhea" id="RHEA:18245"/>
        <dbReference type="ChEBI" id="CHEBI:15378"/>
        <dbReference type="ChEBI" id="CHEBI:30616"/>
        <dbReference type="ChEBI" id="CHEBI:57287"/>
        <dbReference type="ChEBI" id="CHEBI:57328"/>
        <dbReference type="ChEBI" id="CHEBI:456216"/>
        <dbReference type="EC" id="2.7.1.24"/>
    </reaction>
</comment>
<comment type="pathway">
    <text evidence="1">Cofactor biosynthesis; coenzyme A biosynthesis; CoA from (R)-pantothenate: step 5/5.</text>
</comment>
<comment type="subcellular location">
    <subcellularLocation>
        <location evidence="1">Cytoplasm</location>
    </subcellularLocation>
</comment>
<comment type="similarity">
    <text evidence="1">Belongs to the CoaE family.</text>
</comment>
<gene>
    <name evidence="1" type="primary">coaE</name>
    <name type="ordered locus">EF_0880</name>
</gene>